<gene>
    <name evidence="1" type="primary">phnN</name>
    <name type="ordered locus">Meso_3660</name>
</gene>
<feature type="chain" id="PRO_0000412790" description="Ribose 1,5-bisphosphate phosphokinase PhnN">
    <location>
        <begin position="1"/>
        <end position="209"/>
    </location>
</feature>
<feature type="binding site" evidence="1">
    <location>
        <begin position="27"/>
        <end position="34"/>
    </location>
    <ligand>
        <name>ATP</name>
        <dbReference type="ChEBI" id="CHEBI:30616"/>
    </ligand>
</feature>
<accession>Q11C47</accession>
<organism>
    <name type="scientific">Chelativorans sp. (strain BNC1)</name>
    <dbReference type="NCBI Taxonomy" id="266779"/>
    <lineage>
        <taxon>Bacteria</taxon>
        <taxon>Pseudomonadati</taxon>
        <taxon>Pseudomonadota</taxon>
        <taxon>Alphaproteobacteria</taxon>
        <taxon>Hyphomicrobiales</taxon>
        <taxon>Phyllobacteriaceae</taxon>
        <taxon>Chelativorans</taxon>
    </lineage>
</organism>
<reference key="1">
    <citation type="submission" date="2006-06" db="EMBL/GenBank/DDBJ databases">
        <title>Complete sequence of chromosome of Mesorhizobium sp. BNC1.</title>
        <authorList>
            <consortium name="US DOE Joint Genome Institute"/>
            <person name="Copeland A."/>
            <person name="Lucas S."/>
            <person name="Lapidus A."/>
            <person name="Barry K."/>
            <person name="Detter J.C."/>
            <person name="Glavina del Rio T."/>
            <person name="Hammon N."/>
            <person name="Israni S."/>
            <person name="Dalin E."/>
            <person name="Tice H."/>
            <person name="Pitluck S."/>
            <person name="Chertkov O."/>
            <person name="Brettin T."/>
            <person name="Bruce D."/>
            <person name="Han C."/>
            <person name="Tapia R."/>
            <person name="Gilna P."/>
            <person name="Schmutz J."/>
            <person name="Larimer F."/>
            <person name="Land M."/>
            <person name="Hauser L."/>
            <person name="Kyrpides N."/>
            <person name="Mikhailova N."/>
            <person name="Richardson P."/>
        </authorList>
    </citation>
    <scope>NUCLEOTIDE SEQUENCE [LARGE SCALE GENOMIC DNA]</scope>
    <source>
        <strain>BNC1</strain>
    </source>
</reference>
<keyword id="KW-0067">ATP-binding</keyword>
<keyword id="KW-0547">Nucleotide-binding</keyword>
<keyword id="KW-0808">Transferase</keyword>
<protein>
    <recommendedName>
        <fullName evidence="1">Ribose 1,5-bisphosphate phosphokinase PhnN</fullName>
        <ecNumber evidence="1">2.7.4.23</ecNumber>
    </recommendedName>
    <alternativeName>
        <fullName evidence="1">Ribose 1,5-bisphosphokinase</fullName>
    </alternativeName>
</protein>
<dbReference type="EC" id="2.7.4.23" evidence="1"/>
<dbReference type="EMBL" id="CP000390">
    <property type="protein sequence ID" value="ABG65028.1"/>
    <property type="molecule type" value="Genomic_DNA"/>
</dbReference>
<dbReference type="SMR" id="Q11C47"/>
<dbReference type="STRING" id="266779.Meso_3660"/>
<dbReference type="KEGG" id="mes:Meso_3660"/>
<dbReference type="eggNOG" id="COG3709">
    <property type="taxonomic scope" value="Bacteria"/>
</dbReference>
<dbReference type="HOGENOM" id="CLU_102477_0_0_5"/>
<dbReference type="OrthoDB" id="341217at2"/>
<dbReference type="UniPathway" id="UPA00087">
    <property type="reaction ID" value="UER00175"/>
</dbReference>
<dbReference type="GO" id="GO:0005524">
    <property type="term" value="F:ATP binding"/>
    <property type="evidence" value="ECO:0007669"/>
    <property type="project" value="UniProtKB-KW"/>
</dbReference>
<dbReference type="GO" id="GO:0033863">
    <property type="term" value="F:ribose 1,5-bisphosphate phosphokinase activity"/>
    <property type="evidence" value="ECO:0007669"/>
    <property type="project" value="UniProtKB-UniRule"/>
</dbReference>
<dbReference type="GO" id="GO:0006015">
    <property type="term" value="P:5-phosphoribose 1-diphosphate biosynthetic process"/>
    <property type="evidence" value="ECO:0007669"/>
    <property type="project" value="UniProtKB-UniRule"/>
</dbReference>
<dbReference type="GO" id="GO:0019634">
    <property type="term" value="P:organic phosphonate metabolic process"/>
    <property type="evidence" value="ECO:0007669"/>
    <property type="project" value="UniProtKB-UniRule"/>
</dbReference>
<dbReference type="Gene3D" id="3.40.50.300">
    <property type="entry name" value="P-loop containing nucleotide triphosphate hydrolases"/>
    <property type="match status" value="1"/>
</dbReference>
<dbReference type="HAMAP" id="MF_00836">
    <property type="entry name" value="PhnN"/>
    <property type="match status" value="1"/>
</dbReference>
<dbReference type="InterPro" id="IPR027417">
    <property type="entry name" value="P-loop_NTPase"/>
</dbReference>
<dbReference type="InterPro" id="IPR012699">
    <property type="entry name" value="PhnN"/>
</dbReference>
<dbReference type="NCBIfam" id="TIGR02322">
    <property type="entry name" value="phosphon_PhnN"/>
    <property type="match status" value="1"/>
</dbReference>
<dbReference type="SUPFAM" id="SSF52540">
    <property type="entry name" value="P-loop containing nucleoside triphosphate hydrolases"/>
    <property type="match status" value="1"/>
</dbReference>
<comment type="function">
    <text evidence="1">Catalyzes the phosphorylation of ribose 1,5-bisphosphate to 5-phospho-D-ribosyl alpha-1-diphosphate (PRPP).</text>
</comment>
<comment type="catalytic activity">
    <reaction evidence="1">
        <text>alpha-D-ribose 1,5-bisphosphate + ATP = 5-phospho-alpha-D-ribose 1-diphosphate + ADP</text>
        <dbReference type="Rhea" id="RHEA:20109"/>
        <dbReference type="ChEBI" id="CHEBI:30616"/>
        <dbReference type="ChEBI" id="CHEBI:58017"/>
        <dbReference type="ChEBI" id="CHEBI:68688"/>
        <dbReference type="ChEBI" id="CHEBI:456216"/>
        <dbReference type="EC" id="2.7.4.23"/>
    </reaction>
</comment>
<comment type="pathway">
    <text evidence="1">Metabolic intermediate biosynthesis; 5-phospho-alpha-D-ribose 1-diphosphate biosynthesis; 5-phospho-alpha-D-ribose 1-diphosphate from D-ribose 5-phosphate (route II): step 3/3.</text>
</comment>
<comment type="similarity">
    <text evidence="1">Belongs to the ribose 1,5-bisphosphokinase family.</text>
</comment>
<evidence type="ECO:0000255" key="1">
    <source>
        <dbReference type="HAMAP-Rule" id="MF_00836"/>
    </source>
</evidence>
<proteinExistence type="inferred from homology"/>
<name>PHNN_CHESB</name>
<sequence>MFSASIERAQNEAPFPIRQGVFVAVAGPSGGGKDSVMAYARERLGNLAGEIVFARRIITRPFAPGGEEHDTRDVPTFEREEAAGAFALSWRANGLCYALPAALDEEMRSGGVVVANVSRAIIPALGERYAHIFPVIVTAPRGVLAERLSRRGRETRDEVLSRLARSEAGELDVPGALVIDNSGPLEQAGERFLEALRKAAAWSDVCDMV</sequence>